<dbReference type="EMBL" id="U09383">
    <property type="protein sequence ID" value="AAA50215.1"/>
    <property type="status" value="ALT_INIT"/>
    <property type="molecule type" value="mRNA"/>
</dbReference>
<dbReference type="EMBL" id="L16912">
    <property type="protein sequence ID" value="AAA39746.1"/>
    <property type="molecule type" value="mRNA"/>
</dbReference>
<dbReference type="EMBL" id="AF156674">
    <property type="protein sequence ID" value="AAD49225.1"/>
    <property type="molecule type" value="mRNA"/>
</dbReference>
<dbReference type="EMBL" id="AF465244">
    <property type="protein sequence ID" value="AAL69971.1"/>
    <property type="molecule type" value="mRNA"/>
</dbReference>
<dbReference type="CCDS" id="CCDS79275.1">
    <molecule id="Q08460-3"/>
</dbReference>
<dbReference type="CCDS" id="CCDS79276.1">
    <molecule id="Q08460-4"/>
</dbReference>
<dbReference type="CCDS" id="CCDS79277.1">
    <molecule id="Q08460-1"/>
</dbReference>
<dbReference type="PIR" id="A48206">
    <property type="entry name" value="A48206"/>
</dbReference>
<dbReference type="PIR" id="I49017">
    <property type="entry name" value="I49017"/>
</dbReference>
<dbReference type="RefSeq" id="NP_001240294.1">
    <property type="nucleotide sequence ID" value="NM_001253365.1"/>
</dbReference>
<dbReference type="RefSeq" id="NP_001240298.1">
    <property type="nucleotide sequence ID" value="NM_001253369.1"/>
</dbReference>
<dbReference type="RefSeq" id="NP_034740.2">
    <property type="nucleotide sequence ID" value="NM_010610.3"/>
</dbReference>
<dbReference type="BMRB" id="Q08460"/>
<dbReference type="SMR" id="Q08460"/>
<dbReference type="BioGRID" id="200913">
    <property type="interactions" value="185"/>
</dbReference>
<dbReference type="DIP" id="DIP-42413N"/>
<dbReference type="FunCoup" id="Q08460">
    <property type="interactions" value="1310"/>
</dbReference>
<dbReference type="IntAct" id="Q08460">
    <property type="interactions" value="200"/>
</dbReference>
<dbReference type="MINT" id="Q08460"/>
<dbReference type="STRING" id="10090.ENSMUSP00000140275"/>
<dbReference type="ChEMBL" id="CHEMBL2800"/>
<dbReference type="DrugBank" id="DB08837">
    <property type="generic name" value="Tetraethylammonium"/>
</dbReference>
<dbReference type="GuidetoPHARMACOLOGY" id="380"/>
<dbReference type="GlyGen" id="Q08460">
    <property type="glycosylation" value="3 sites, 1 N-linked glycan (1 site), 1 O-linked glycan (1 site)"/>
</dbReference>
<dbReference type="iPTMnet" id="Q08460"/>
<dbReference type="PhosphoSitePlus" id="Q08460"/>
<dbReference type="SwissPalm" id="Q08460"/>
<dbReference type="PaxDb" id="10090-ENSMUSP00000140275"/>
<dbReference type="PeptideAtlas" id="Q08460"/>
<dbReference type="ProteomicsDB" id="269190">
    <molecule id="Q08460-1"/>
</dbReference>
<dbReference type="ProteomicsDB" id="269191">
    <molecule id="Q08460-2"/>
</dbReference>
<dbReference type="ProteomicsDB" id="269192">
    <molecule id="Q08460-3"/>
</dbReference>
<dbReference type="ProteomicsDB" id="269193">
    <molecule id="Q08460-4"/>
</dbReference>
<dbReference type="ProteomicsDB" id="269194">
    <molecule id="Q08460-5"/>
</dbReference>
<dbReference type="ABCD" id="Q08460">
    <property type="antibodies" value="3 sequenced antibodies"/>
</dbReference>
<dbReference type="DNASU" id="16531"/>
<dbReference type="GeneID" id="16531"/>
<dbReference type="KEGG" id="mmu:16531"/>
<dbReference type="UCSC" id="uc029sfy.1">
    <molecule id="Q08460-2"/>
    <property type="organism name" value="mouse"/>
</dbReference>
<dbReference type="AGR" id="MGI:99923"/>
<dbReference type="CTD" id="3778"/>
<dbReference type="MGI" id="MGI:99923">
    <property type="gene designation" value="Kcnma1"/>
</dbReference>
<dbReference type="eggNOG" id="KOG1420">
    <property type="taxonomic scope" value="Eukaryota"/>
</dbReference>
<dbReference type="InParanoid" id="Q08460"/>
<dbReference type="OrthoDB" id="10035564at2759"/>
<dbReference type="PhylomeDB" id="Q08460"/>
<dbReference type="Reactome" id="R-MMU-1296052">
    <property type="pathway name" value="Ca2+ activated K+ channels"/>
</dbReference>
<dbReference type="BioGRID-ORCS" id="16531">
    <property type="hits" value="0 hits in 72 CRISPR screens"/>
</dbReference>
<dbReference type="CD-CODE" id="CE726F99">
    <property type="entry name" value="Postsynaptic density"/>
</dbReference>
<dbReference type="ChiTaRS" id="Kcnma1">
    <property type="organism name" value="mouse"/>
</dbReference>
<dbReference type="PRO" id="PR:Q08460"/>
<dbReference type="Proteomes" id="UP000000589">
    <property type="component" value="Unplaced"/>
</dbReference>
<dbReference type="RNAct" id="Q08460">
    <property type="molecule type" value="protein"/>
</dbReference>
<dbReference type="GO" id="GO:0016324">
    <property type="term" value="C:apical plasma membrane"/>
    <property type="evidence" value="ECO:0000314"/>
    <property type="project" value="MGI"/>
</dbReference>
<dbReference type="GO" id="GO:0005783">
    <property type="term" value="C:endoplasmic reticulum"/>
    <property type="evidence" value="ECO:0000314"/>
    <property type="project" value="MGI"/>
</dbReference>
<dbReference type="GO" id="GO:0009897">
    <property type="term" value="C:external side of plasma membrane"/>
    <property type="evidence" value="ECO:0000314"/>
    <property type="project" value="MGI"/>
</dbReference>
<dbReference type="GO" id="GO:0016020">
    <property type="term" value="C:membrane"/>
    <property type="evidence" value="ECO:0000314"/>
    <property type="project" value="MGI"/>
</dbReference>
<dbReference type="GO" id="GO:0005886">
    <property type="term" value="C:plasma membrane"/>
    <property type="evidence" value="ECO:0000314"/>
    <property type="project" value="MGI"/>
</dbReference>
<dbReference type="GO" id="GO:0045211">
    <property type="term" value="C:postsynaptic membrane"/>
    <property type="evidence" value="ECO:0000314"/>
    <property type="project" value="MGI"/>
</dbReference>
<dbReference type="GO" id="GO:0016528">
    <property type="term" value="C:sarcoplasm"/>
    <property type="evidence" value="ECO:0000314"/>
    <property type="project" value="MGI"/>
</dbReference>
<dbReference type="GO" id="GO:0043195">
    <property type="term" value="C:terminal bouton"/>
    <property type="evidence" value="ECO:0000314"/>
    <property type="project" value="MGI"/>
</dbReference>
<dbReference type="GO" id="GO:0008076">
    <property type="term" value="C:voltage-gated potassium channel complex"/>
    <property type="evidence" value="ECO:0000316"/>
    <property type="project" value="MGI"/>
</dbReference>
<dbReference type="GO" id="GO:0015269">
    <property type="term" value="F:calcium-activated potassium channel activity"/>
    <property type="evidence" value="ECO:0000314"/>
    <property type="project" value="MGI"/>
</dbReference>
<dbReference type="GO" id="GO:0042802">
    <property type="term" value="F:identical protein binding"/>
    <property type="evidence" value="ECO:0000314"/>
    <property type="project" value="MGI"/>
</dbReference>
<dbReference type="GO" id="GO:0060072">
    <property type="term" value="F:large conductance calcium-activated potassium channel activity"/>
    <property type="evidence" value="ECO:0000314"/>
    <property type="project" value="MGI"/>
</dbReference>
<dbReference type="GO" id="GO:0046872">
    <property type="term" value="F:metal ion binding"/>
    <property type="evidence" value="ECO:0007669"/>
    <property type="project" value="UniProtKB-KW"/>
</dbReference>
<dbReference type="GO" id="GO:0005267">
    <property type="term" value="F:potassium channel activity"/>
    <property type="evidence" value="ECO:0000315"/>
    <property type="project" value="MGI"/>
</dbReference>
<dbReference type="GO" id="GO:0005249">
    <property type="term" value="F:voltage-gated potassium channel activity"/>
    <property type="evidence" value="ECO:0000314"/>
    <property type="project" value="MGI"/>
</dbReference>
<dbReference type="GO" id="GO:0007628">
    <property type="term" value="P:adult walking behavior"/>
    <property type="evidence" value="ECO:0000315"/>
    <property type="project" value="MGI"/>
</dbReference>
<dbReference type="GO" id="GO:0007268">
    <property type="term" value="P:chemical synaptic transmission"/>
    <property type="evidence" value="ECO:0000315"/>
    <property type="project" value="MGI"/>
</dbReference>
<dbReference type="GO" id="GO:0007623">
    <property type="term" value="P:circadian rhythm"/>
    <property type="evidence" value="ECO:0000315"/>
    <property type="project" value="MGI"/>
</dbReference>
<dbReference type="GO" id="GO:0002069">
    <property type="term" value="P:columnar/cuboidal epithelial cell maturation"/>
    <property type="evidence" value="ECO:0000315"/>
    <property type="project" value="MGI"/>
</dbReference>
<dbReference type="GO" id="GO:0060082">
    <property type="term" value="P:eye blink reflex"/>
    <property type="evidence" value="ECO:0000315"/>
    <property type="project" value="MGI"/>
</dbReference>
<dbReference type="GO" id="GO:0042491">
    <property type="term" value="P:inner ear auditory receptor cell differentiation"/>
    <property type="evidence" value="ECO:0000315"/>
    <property type="project" value="MGI"/>
</dbReference>
<dbReference type="GO" id="GO:0045475">
    <property type="term" value="P:locomotor rhythm"/>
    <property type="evidence" value="ECO:0000315"/>
    <property type="project" value="MGI"/>
</dbReference>
<dbReference type="GO" id="GO:0060073">
    <property type="term" value="P:micturition"/>
    <property type="evidence" value="ECO:0000315"/>
    <property type="project" value="MGI"/>
</dbReference>
<dbReference type="GO" id="GO:0045794">
    <property type="term" value="P:negative regulation of cell volume"/>
    <property type="evidence" value="ECO:0000315"/>
    <property type="project" value="MGI"/>
</dbReference>
<dbReference type="GO" id="GO:0050885">
    <property type="term" value="P:neuromuscular process controlling balance"/>
    <property type="evidence" value="ECO:0000315"/>
    <property type="project" value="MGI"/>
</dbReference>
<dbReference type="GO" id="GO:0042551">
    <property type="term" value="P:neuron maturation"/>
    <property type="evidence" value="ECO:0000315"/>
    <property type="project" value="MGI"/>
</dbReference>
<dbReference type="GO" id="GO:0019228">
    <property type="term" value="P:neuronal action potential"/>
    <property type="evidence" value="ECO:0000315"/>
    <property type="project" value="MGI"/>
</dbReference>
<dbReference type="GO" id="GO:0006813">
    <property type="term" value="P:potassium ion transport"/>
    <property type="evidence" value="ECO:0000314"/>
    <property type="project" value="MGI"/>
</dbReference>
<dbReference type="GO" id="GO:0032344">
    <property type="term" value="P:regulation of aldosterone metabolic process"/>
    <property type="evidence" value="ECO:0000315"/>
    <property type="project" value="MGI"/>
</dbReference>
<dbReference type="GO" id="GO:0042391">
    <property type="term" value="P:regulation of membrane potential"/>
    <property type="evidence" value="ECO:0000314"/>
    <property type="project" value="MGI"/>
</dbReference>
<dbReference type="GO" id="GO:0060087">
    <property type="term" value="P:relaxation of vascular associated smooth muscle"/>
    <property type="evidence" value="ECO:0000315"/>
    <property type="project" value="MGI"/>
</dbReference>
<dbReference type="GO" id="GO:0001666">
    <property type="term" value="P:response to hypoxia"/>
    <property type="evidence" value="ECO:0000314"/>
    <property type="project" value="MGI"/>
</dbReference>
<dbReference type="GO" id="GO:0046541">
    <property type="term" value="P:saliva secretion"/>
    <property type="evidence" value="ECO:0000316"/>
    <property type="project" value="MGI"/>
</dbReference>
<dbReference type="GO" id="GO:0007605">
    <property type="term" value="P:sensory perception of sound"/>
    <property type="evidence" value="ECO:0000315"/>
    <property type="project" value="MGI"/>
</dbReference>
<dbReference type="GO" id="GO:0060083">
    <property type="term" value="P:smooth muscle contraction involved in micturition"/>
    <property type="evidence" value="ECO:0000315"/>
    <property type="project" value="MGI"/>
</dbReference>
<dbReference type="GO" id="GO:0042311">
    <property type="term" value="P:vasodilation"/>
    <property type="evidence" value="ECO:0000315"/>
    <property type="project" value="MGI"/>
</dbReference>
<dbReference type="FunFam" id="3.40.50.720:FF:000098">
    <property type="entry name" value="calcium-activated potassium channel subunit alpha-1 isoform X3"/>
    <property type="match status" value="1"/>
</dbReference>
<dbReference type="FunFam" id="3.40.50.720:FF:000005">
    <property type="entry name" value="calcium-activated potassium channel subunit alpha-1 isoform X6"/>
    <property type="match status" value="1"/>
</dbReference>
<dbReference type="FunFam" id="1.10.287.70:FF:000015">
    <property type="entry name" value="Calcium-activated potassium channel subunit alpha-1 isoform X7"/>
    <property type="match status" value="1"/>
</dbReference>
<dbReference type="Gene3D" id="1.10.287.70">
    <property type="match status" value="1"/>
</dbReference>
<dbReference type="Gene3D" id="3.40.50.720">
    <property type="entry name" value="NAD(P)-binding Rossmann-like Domain"/>
    <property type="match status" value="2"/>
</dbReference>
<dbReference type="InterPro" id="IPR005821">
    <property type="entry name" value="Ion_trans_dom"/>
</dbReference>
<dbReference type="InterPro" id="IPR003929">
    <property type="entry name" value="K_chnl_BK_asu"/>
</dbReference>
<dbReference type="InterPro" id="IPR047871">
    <property type="entry name" value="K_chnl_Slo-like"/>
</dbReference>
<dbReference type="InterPro" id="IPR036291">
    <property type="entry name" value="NAD(P)-bd_dom_sf"/>
</dbReference>
<dbReference type="InterPro" id="IPR003148">
    <property type="entry name" value="RCK_N"/>
</dbReference>
<dbReference type="InterPro" id="IPR048735">
    <property type="entry name" value="Slowpoke-like_C"/>
</dbReference>
<dbReference type="PANTHER" id="PTHR10027">
    <property type="entry name" value="CALCIUM-ACTIVATED POTASSIUM CHANNEL ALPHA CHAIN"/>
    <property type="match status" value="1"/>
</dbReference>
<dbReference type="PANTHER" id="PTHR10027:SF28">
    <property type="entry name" value="CALCIUM-ACTIVATED POTASSIUM CHANNEL SUBUNIT ALPHA-1"/>
    <property type="match status" value="1"/>
</dbReference>
<dbReference type="Pfam" id="PF03493">
    <property type="entry name" value="BK_channel_a"/>
    <property type="match status" value="1"/>
</dbReference>
<dbReference type="Pfam" id="PF00520">
    <property type="entry name" value="Ion_trans"/>
    <property type="match status" value="1"/>
</dbReference>
<dbReference type="Pfam" id="PF22614">
    <property type="entry name" value="Slo-like_RCK"/>
    <property type="match status" value="2"/>
</dbReference>
<dbReference type="Pfam" id="PF21014">
    <property type="entry name" value="Slowpoke_C"/>
    <property type="match status" value="1"/>
</dbReference>
<dbReference type="PRINTS" id="PR01449">
    <property type="entry name" value="BKCHANNELA"/>
</dbReference>
<dbReference type="PRINTS" id="PR00169">
    <property type="entry name" value="KCHANNEL"/>
</dbReference>
<dbReference type="SUPFAM" id="SSF51735">
    <property type="entry name" value="NAD(P)-binding Rossmann-fold domains"/>
    <property type="match status" value="1"/>
</dbReference>
<dbReference type="SUPFAM" id="SSF81324">
    <property type="entry name" value="Voltage-gated potassium channels"/>
    <property type="match status" value="1"/>
</dbReference>
<dbReference type="PROSITE" id="PS51201">
    <property type="entry name" value="RCK_N"/>
    <property type="match status" value="2"/>
</dbReference>
<sequence length="1209" mass="134396">MANGGGGGGGSSGGGGGGGGGSGLRMSSNIHANNLSLDASSSSSSSSSSSSSSSSSSSSSVHEPKMDALIIPVTMEVPCDSRGQRMWWAFLASSMVTFFGGLFIILLWRTLKYLWTVCCHCGGKTKEAQKINNGSSQADGTLKPVDEKEEVVAAEVGWMTSVKDWAGVMISAQTLTGRVLVVLVFALSIGALVIYFIDSSNPIESCQNFYKDFTLQIDMAFNVFFLLYFGLRFIAANDKLWFWLEVNSVVDFFTVPPVFVSVYLNRSWLGLRFLRALRLIQFSEILQFLNILKTSNSIKLVNLLSIFISTWLTAAGFIHLVENSGDPWENFQNNQALTYWECVYLLMVTMSTVGYGDVYAKTTLGRLFMVFFILGGLAMFASYVPEIIELIGNRKKYGGSYSAVSGRKHIVVCGHITLESVSNFLKDFLHKDRDDVNVEIVFLHNISPNLELEALFKRHFTQVEFYQGSVLNPHDLARVKIESADACLILANKYCADPDAEDASNIMRVISIKNYHPKIRIITQMLQYHNKAHLLNIPSWNWKEGDDAICLAELKLGFIAQSCLAQGLSTMLANLFSMRSFIKIEEDTWQKYYLEGVSNEMYTEYLSSAFVGLSFPTVCELCFVKLKLLMIAIEYKSANRESRSRKRILINPGNHLKIQEGTLGFFIASDAKEVKRAFFYCKACHDDVTDPKRIKKCGCRRLEDEQPPTLSPKKKQRNGGMRNSPNTSPKLMRHDPLLIPGNDQIDNMDSNVKKYDSTGMFHWCAPKEIEKVILTRSEAAMTVLSGHVVVCIFGDVSSALIGLRNLVMPLRASNFHYHELKHIVFVGSIEYLKREWETLHNFPKVSILPGTPLSRADLRAVNINLCDMCVILSANQNNIDDTSLQDKECILASLNIKSMQFDDSIGVLQANSQGFTPPGMDRSSPDNSPVHGMLRQPSITTGVNIPIITELAKPGKLPLVSVNQEKNSGTHILMITELVNDTNVQFLDQDDDDDPDTELYLTQPFACGTAFAVSVLDSLMSATYFNDNILTLIRTLVTGGATPELEALIAEENALRGGYSTPQTLANRDRCRVAQLALLDGPFADLGDGGCYGDLFCKALKTYNMLCFGIYRLRDAHLSTPSQCTKRYVITNPPYEFELVPTDLIFCLMQFDHNAGQSRASLSHSSHSSQSSSKKSSSVHSIPSTANRPNRPKSRESRDKQNRKEMVYR</sequence>
<reference key="1">
    <citation type="journal article" date="1994" name="Hum. Mol. Genet.">
        <title>Cloning and characterization of human and mouse homologs of the Drosophila calcium-activated potassium channel gene, slowpoke.</title>
        <authorList>
            <person name="Pallanck L."/>
            <person name="Ganetzky B."/>
        </authorList>
    </citation>
    <scope>NUCLEOTIDE SEQUENCE [MRNA] (ISOFORM 1)</scope>
    <source>
        <tissue>Brain</tissue>
    </source>
</reference>
<reference key="2">
    <citation type="journal article" date="1993" name="Science">
        <title>mSlo, a complex mouse gene encoding 'maxi' calcium-activated potassium channels.</title>
        <authorList>
            <person name="Butler A."/>
            <person name="Tsunoda S."/>
            <person name="McCobb D.P."/>
            <person name="Wei A."/>
            <person name="Salkoff L."/>
        </authorList>
    </citation>
    <scope>NUCLEOTIDE SEQUENCE [MRNA] OF 26-1209 (ISOFORM 2)</scope>
    <scope>FUNCTION</scope>
    <scope>TRANSPORTER ACTIVITY</scope>
    <source>
        <tissue>Brain</tissue>
    </source>
</reference>
<reference key="3">
    <citation type="journal article" date="2006" name="Nat. Neurosci.">
        <title>CaM kinase II phosphorylation of slo Thr107 regulates activity and ethanol responses of BK channels.</title>
        <authorList>
            <person name="Liu J."/>
            <person name="Asuncion-Chin M."/>
            <person name="Liu P."/>
            <person name="Dopico A.M."/>
        </authorList>
    </citation>
    <scope>MUTAGENESIS OF VAL-151</scope>
</reference>
<reference key="4">
    <citation type="journal article" date="1999" name="Mol. Endocrinol.">
        <title>Molecular components of large conductance calcium-activated potassium (BK) channels in mouse pituitary corticotropes.</title>
        <authorList>
            <person name="Shipston M.J."/>
            <person name="Duncan R.R."/>
            <person name="Clark A.G."/>
            <person name="Antoni F.A."/>
            <person name="Tian L."/>
        </authorList>
    </citation>
    <scope>NUCLEOTIDE SEQUENCE [MRNA] OF 66-1209 (ISOFORM 4)</scope>
    <scope>FUNCTION</scope>
    <scope>TRANSPORTER ACTIVITY</scope>
    <source>
        <tissue>Pituitary anterior lobe</tissue>
    </source>
</reference>
<reference key="5">
    <citation type="journal article" date="2003" name="Am. J. Physiol.">
        <title>Molecular identification of Ca2+-activated K+ channels in parotid acinar cells.</title>
        <authorList>
            <person name="Nehrke K."/>
            <person name="Quinn C.C."/>
            <person name="Begenisich T."/>
        </authorList>
    </citation>
    <scope>NUCLEOTIDE SEQUENCE [MRNA] OF 66-1209 (ISOFORM 3)</scope>
    <scope>FUNCTION</scope>
    <scope>TRANSPORTER ACTIVITY</scope>
    <source>
        <strain>NIH Swiss</strain>
        <tissue>Parotid gland</tissue>
    </source>
</reference>
<reference key="6">
    <citation type="journal article" date="2000" name="J. Neurosci.">
        <title>A novel nervous system beta subunit that downregulates human large conductance calcium-dependent potassium channels.</title>
        <authorList>
            <person name="Weiger T.M."/>
            <person name="Holmqvist M.H."/>
            <person name="Levitan I.B."/>
            <person name="Clark F.T."/>
            <person name="Sprague S."/>
            <person name="Huang W.-J."/>
            <person name="Ge P."/>
            <person name="Wang C."/>
            <person name="Lawson D."/>
            <person name="Jurman M.E."/>
            <person name="Glucksmann M.A."/>
            <person name="Silos-Santiago I."/>
            <person name="DiStefano P.S."/>
            <person name="Curtis R."/>
        </authorList>
    </citation>
    <scope>INTERACTION WITH KCNMB3</scope>
</reference>
<reference key="7">
    <citation type="journal article" date="2000" name="Biochemistry">
        <title>Allosteric linkage between voltage and Ca(2+)-dependent activation of BK-type mslo1 K(+) channels.</title>
        <authorList>
            <person name="Cui J."/>
            <person name="Aldrich R.W."/>
        </authorList>
    </citation>
    <scope>MUTAGENESIS OF ARG-272; ARG-278; GLU-284 AND GLN-287</scope>
</reference>
<reference key="8">
    <citation type="journal article" date="2002" name="J. Gen. Physiol.">
        <title>Elimination of the BK(Ca) channel's high-affinity Ca(2+) sensitivity.</title>
        <authorList>
            <person name="Bao L."/>
            <person name="Rapin A.M."/>
            <person name="Holmstrand E.C."/>
            <person name="Cox D.H."/>
        </authorList>
    </citation>
    <scope>CALCIUM-BINDING</scope>
    <scope>MUTAGENESIS OF 992-ASP--ASP-996</scope>
</reference>
<reference key="9">
    <citation type="journal article" date="2002" name="Nature">
        <title>Mechanism of magnesium activation of calcium-activated potassium channels.</title>
        <authorList>
            <person name="Shi J."/>
            <person name="Krishnamoorthy G."/>
            <person name="Yang Y."/>
            <person name="Hu L."/>
            <person name="Chaturvedi N."/>
            <person name="Harilal D."/>
            <person name="Qin J."/>
            <person name="Cui J."/>
        </authorList>
    </citation>
    <scope>MAGNESIUM-BINDING</scope>
    <scope>MUTAGENESIS OF GLU-439; HIS-444; THR-461; GLN-462 AND GLU-464</scope>
</reference>
<reference key="10">
    <citation type="journal article" date="2002" name="Nature">
        <title>Multiple regulatory sites in large-conductance calcium-activated potassium channels.</title>
        <authorList>
            <person name="Xia X.-M."/>
            <person name="Zeng X."/>
            <person name="Lingle C.J."/>
        </authorList>
    </citation>
    <scope>CALCIUM-BINDING</scope>
    <scope>MAGNESIUM-BINDING</scope>
    <scope>MUTAGENESIS OF ASP-427; ASP-432; ASP-434 AND GLU-464</scope>
</reference>
<reference key="11">
    <citation type="journal article" date="2010" name="Cell">
        <title>A tissue-specific atlas of mouse protein phosphorylation and expression.</title>
        <authorList>
            <person name="Huttlin E.L."/>
            <person name="Jedrychowski M.P."/>
            <person name="Elias J.E."/>
            <person name="Goswami T."/>
            <person name="Rad R."/>
            <person name="Beausoleil S.A."/>
            <person name="Villen J."/>
            <person name="Haas W."/>
            <person name="Sowa M.E."/>
            <person name="Gygi S.P."/>
        </authorList>
    </citation>
    <scope>PHOSPHORYLATION [LARGE SCALE ANALYSIS] AT THR-709; SER-711; SER-724; SER-728; THR-916; SER-924 AND SER-928</scope>
    <scope>PHOSPHORYLATION [LARGE SCALE ANALYSIS] AT THR-670 AND SER-672 (ISOFORM 2)</scope>
    <scope>IDENTIFICATION BY MASS SPECTROMETRY [LARGE SCALE ANALYSIS]</scope>
    <source>
        <tissue>Brain</tissue>
        <tissue>Testis</tissue>
    </source>
</reference>
<reference key="12">
    <citation type="journal article" date="2012" name="Biochem. Biophys. Res. Commun.">
        <title>The large conductance calcium-activated K(+) channel interacts with the small GTPase Rab11b.</title>
        <authorList>
            <person name="Sokolowski S."/>
            <person name="Harvey M."/>
            <person name="Sakai Y."/>
            <person name="Jordan A."/>
            <person name="Sokolowski B."/>
        </authorList>
    </citation>
    <scope>INTERACTION WITH RAB11B</scope>
</reference>
<accession>Q08460</accession>
<accession>Q64703</accession>
<accession>Q8VHF1</accession>
<accession>Q9R196</accession>
<comment type="function">
    <text evidence="2">Potassium channel activated by both membrane depolarization or increase in cytosolic Ca(2+) that mediates export of K(+). It is also activated by the concentration of cytosolic Mg(2+). Its activation dampens the excitatory events that elevate the cytosolic Ca(2+) concentration and/or depolarize the cell membrane. It therefore contributes to repolarization of the membrane potential. Plays a key role in controlling excitability in a number of systems, such as regulation of the contraction of smooth muscle, the tuning of hair cells in the cochlea, regulation of transmitter release, and innate immunity. In smooth muscles, its activation by high level of Ca(2+), caused by ryanodine receptors in the sarcoplasmic reticulum, regulates the membrane potential. In cochlea cells, its number and kinetic properties partly determine the characteristic frequency of each hair cell and thereby helps to establish a tonotopic map. Kinetics of KCNMA1 channels are determined by alternative splicing, phosphorylation status and its combination with modulating beta subunits. Highly sensitive to both iberiotoxin (IbTx) and charybdotoxin (CTX).</text>
</comment>
<comment type="function">
    <molecule>Isoform 2</molecule>
    <text evidence="16">Potassium channel activated by both membrane depolarization or increase in cytosolic Ca(2+) that mediates export of K(+).</text>
</comment>
<comment type="function">
    <molecule>Isoform 3</molecule>
    <text evidence="13">Potassium channel activated by both membrane depolarization or increase in cytosolic Ca(2+) that mediates export of K(+).</text>
</comment>
<comment type="function">
    <molecule>Isoform 4</molecule>
    <text evidence="7">Potassium channel activated by both membrane depolarization or increase in cytosolic Ca(2+) that mediates export of K(+).</text>
</comment>
<comment type="catalytic activity">
    <molecule>Isoform 2</molecule>
    <reaction evidence="16">
        <text>K(+)(in) = K(+)(out)</text>
        <dbReference type="Rhea" id="RHEA:29463"/>
        <dbReference type="ChEBI" id="CHEBI:29103"/>
    </reaction>
</comment>
<comment type="catalytic activity">
    <molecule>Isoform 3</molecule>
    <reaction evidence="13">
        <text>K(+)(in) = K(+)(out)</text>
        <dbReference type="Rhea" id="RHEA:29463"/>
        <dbReference type="ChEBI" id="CHEBI:29103"/>
    </reaction>
</comment>
<comment type="catalytic activity">
    <molecule>Isoform 4</molecule>
    <reaction evidence="7">
        <text>K(+)(in) = K(+)(out)</text>
        <dbReference type="Rhea" id="RHEA:29463"/>
        <dbReference type="ChEBI" id="CHEBI:29103"/>
    </reaction>
</comment>
<comment type="activity regulation">
    <text evidence="2">Ethanol and carbon monoxide-bound heme increase channel activation. Heme inhibits channel activation (By similarity).</text>
</comment>
<comment type="subunit">
    <text evidence="2 8 15">Homotetramer; which constitutes the calcium-activated potassium channel. Interacts with beta subunits KCNMB1, KCNMB2, KCNMB3 and KCNMB4. Interacts with gamma subunits LRRC26, LRRC38, LRRC52 and LRRC55. Beta and gamma subunits are accessory, and modulate its activity (By similarity). Interacts with RAB11B.</text>
</comment>
<comment type="interaction">
    <interactant intactId="EBI-1633915">
        <id>Q08460</id>
    </interactant>
    <interactant intactId="EBI-351301">
        <id>P63260</id>
        <label>Actg1</label>
    </interactant>
    <organismsDiffer>false</organismsDiffer>
    <experiments>4</experiments>
</comment>
<comment type="interaction">
    <interactant intactId="EBI-1633915">
        <id>Q08460</id>
    </interactant>
    <interactant intactId="EBI-1184119">
        <id>P48036</id>
        <label>Anxa5</label>
    </interactant>
    <organismsDiffer>false</organismsDiffer>
    <experiments>4</experiments>
</comment>
<comment type="interaction">
    <interactant intactId="EBI-1633915">
        <id>Q08460</id>
    </interactant>
    <interactant intactId="EBI-1634106">
        <id>Q00623</id>
        <label>Apoa1</label>
    </interactant>
    <organismsDiffer>false</organismsDiffer>
    <experiments>4</experiments>
</comment>
<comment type="interaction">
    <interactant intactId="EBI-1633915">
        <id>Q08460</id>
    </interactant>
    <interactant intactId="EBI-397460">
        <id>P62204</id>
        <label>Calm3</label>
    </interactant>
    <organismsDiffer>false</organismsDiffer>
    <experiments>4</experiments>
</comment>
<comment type="interaction">
    <interactant intactId="EBI-1633915">
        <id>Q08460</id>
    </interactant>
    <interactant intactId="EBI-397955">
        <id>Q60598</id>
        <label>Cttn</label>
    </interactant>
    <organismsDiffer>false</organismsDiffer>
    <experiments>2</experiments>
</comment>
<comment type="interaction">
    <interactant intactId="EBI-1633915">
        <id>Q08460</id>
    </interactant>
    <interactant intactId="EBI-444871">
        <id>P16858</id>
        <label>Gapdh</label>
    </interactant>
    <organismsDiffer>false</organismsDiffer>
    <experiments>3</experiments>
</comment>
<comment type="interaction">
    <interactant intactId="EBI-1633915">
        <id>Q08460</id>
    </interactant>
    <interactant intactId="EBI-2128343">
        <id>P84075</id>
        <label>Hpca</label>
    </interactant>
    <organismsDiffer>false</organismsDiffer>
    <experiments>3</experiments>
</comment>
<comment type="interaction">
    <interactant intactId="EBI-1633915">
        <id>Q08460</id>
    </interactant>
    <interactant intactId="EBI-821316">
        <id>O88952</id>
        <label>Lin7c</label>
    </interactant>
    <organismsDiffer>false</organismsDiffer>
    <experiments>4</experiments>
</comment>
<comment type="interaction">
    <interactant intactId="EBI-1633915">
        <id>Q08460</id>
    </interactant>
    <interactant intactId="EBI-1634589">
        <id>P27573</id>
        <label>Mpz</label>
    </interactant>
    <organismsDiffer>false</organismsDiffer>
    <experiments>4</experiments>
</comment>
<comment type="interaction">
    <interactant intactId="EBI-1633915">
        <id>Q08460</id>
    </interactant>
    <interactant intactId="EBI-359843">
        <id>P61982</id>
        <label>Ywhag</label>
    </interactant>
    <organismsDiffer>false</organismsDiffer>
    <experiments>4</experiments>
</comment>
<comment type="interaction">
    <interactant intactId="EBI-1633915">
        <id>Q08460</id>
    </interactant>
    <interactant intactId="EBI-7206371">
        <id>P08251</id>
        <label>ATP1B1</label>
    </interactant>
    <organismsDiffer>true</organismsDiffer>
    <experiments>5</experiments>
</comment>
<comment type="interaction">
    <interactant intactId="EBI-1633915">
        <id>Q08460</id>
    </interactant>
    <interactant intactId="EBI-910">
        <id>P46109</id>
        <label>CRKL</label>
    </interactant>
    <organismsDiffer>true</organismsDiffer>
    <experiments>5</experiments>
</comment>
<comment type="interaction">
    <interactant intactId="EBI-1633915">
        <id>Q08460</id>
    </interactant>
    <interactant intactId="EBI-351886">
        <id>Q14247</id>
        <label>CTTN</label>
    </interactant>
    <organismsDiffer>true</organismsDiffer>
    <experiments>3</experiments>
</comment>
<comment type="interaction">
    <interactant intactId="EBI-1633915">
        <id>Q08460</id>
    </interactant>
    <interactant intactId="EBI-740418">
        <id>O75791</id>
        <label>GRAP2</label>
    </interactant>
    <organismsDiffer>true</organismsDiffer>
    <experiments>3</experiments>
</comment>
<comment type="interaction">
    <interactant intactId="EBI-15575817">
        <id>Q08460-4</id>
    </interactant>
    <interactant intactId="EBI-15575793">
        <id>Q8CAE3</id>
        <label>Kcnmb1</label>
    </interactant>
    <organismsDiffer>false</organismsDiffer>
    <experiments>2</experiments>
</comment>
<comment type="subcellular location">
    <subcellularLocation>
        <location evidence="2">Cell membrane</location>
        <topology evidence="4">Multi-pass membrane protein</topology>
    </subcellularLocation>
</comment>
<comment type="alternative products">
    <event type="alternative splicing"/>
    <isoform>
        <id>Q08460-1</id>
        <name>1</name>
        <sequence type="displayed"/>
    </isoform>
    <isoform>
        <id>Q08460-2</id>
        <name>2</name>
        <sequence type="described" ref="VSP_009960 VSP_009961 VSP_009962 VSP_009964 VSP_009965"/>
    </isoform>
    <isoform>
        <id>Q08460-3</id>
        <name>3</name>
        <sequence type="described" ref="VSP_009961 VSP_009964"/>
    </isoform>
    <isoform>
        <id>Q08460-4</id>
        <name>4</name>
        <name>STREX-1</name>
        <sequence type="described" ref="VSP_009961 VSP_009963 VSP_009964"/>
    </isoform>
    <isoform>
        <id>Q08460-5</id>
        <name>5</name>
        <sequence type="described" ref="VSP_009959"/>
    </isoform>
    <text>May be partially controlled by hormonal stress. Additional isoforms seem to exist.</text>
</comment>
<comment type="domain">
    <text evidence="2">The S0 segment is essential for the modulation by the accessory beta subunits KCNMB1, KCNMB2, KCNMB3 and KCNMB4.</text>
</comment>
<comment type="domain">
    <text evidence="2">The S4 segment, which is characterized by a series of positively charged amino acids at every third position, is part of the voltage-sensor.</text>
</comment>
<comment type="domain">
    <text evidence="2">The pore-forming domain (also referred as P region) is imbedded into the membrane, and forms the selectivity filter of the pore. It contains the signature sequence of potassium channels that displays selectivity to potassium.</text>
</comment>
<comment type="domain">
    <text>The RCK N-terminal domain mediates the homotetramerization, thereby promoting the assembly of monomers into functional potassium channel. It includes binding sites for Ca(2+) and Mg(2+).</text>
</comment>
<comment type="domain">
    <text evidence="1">The calcium bowl constitutes one of the Ca(2+) sensors and probably acts as a Ca(2+)-binding site. There are however other Ca(2+) sensors regions required for activation of the channel.</text>
</comment>
<comment type="domain">
    <text evidence="2">The heme-binding motif mediates inhibition of channel activation by heme. Carbon monoxide-bound heme leads to increased channel activation (By similarity).</text>
</comment>
<comment type="PTM">
    <text evidence="20">Phosphorylated (Probable). Phosphorylation by kinases such as PKA and/or PKG. In smooth muscles, phosphorylation affects its activity.</text>
</comment>
<comment type="PTM">
    <text evidence="2">Palmitoylation by ZDHHC22 and ZDHHC23 within the intracellular linker between the S0 and S1 transmembrane domains regulates localization to the plasma membrane. Depalmitoylated by LYPLA1 and LYPLAL1, leading to retard exit from the trans-Golgi network (By similarity).</text>
</comment>
<comment type="miscellaneous">
    <text>The protein was initially thought to contain two functionally distinct parts: The core channel (from the N-terminus to the S9 segment) that mediates the channel activity, and the cytoplasmic tail (from the S9 segment to the C-terminus) that mediates the calcium sensing. The situation is however more complex, since the core channel contains binding sites for Ca(2+) and Mg(2+).</text>
</comment>
<comment type="similarity">
    <text evidence="20">Belongs to the potassium channel family. Calcium-activated (TC 1.A.1.3) subfamily. KCa1.1/KCNMA1 sub-subfamily.</text>
</comment>
<comment type="sequence caution" evidence="20">
    <conflict type="erroneous initiation">
        <sequence resource="EMBL-CDS" id="AAA50215"/>
    </conflict>
</comment>
<proteinExistence type="evidence at protein level"/>
<organism>
    <name type="scientific">Mus musculus</name>
    <name type="common">Mouse</name>
    <dbReference type="NCBI Taxonomy" id="10090"/>
    <lineage>
        <taxon>Eukaryota</taxon>
        <taxon>Metazoa</taxon>
        <taxon>Chordata</taxon>
        <taxon>Craniata</taxon>
        <taxon>Vertebrata</taxon>
        <taxon>Euteleostomi</taxon>
        <taxon>Mammalia</taxon>
        <taxon>Eutheria</taxon>
        <taxon>Euarchontoglires</taxon>
        <taxon>Glires</taxon>
        <taxon>Rodentia</taxon>
        <taxon>Myomorpha</taxon>
        <taxon>Muroidea</taxon>
        <taxon>Muridae</taxon>
        <taxon>Murinae</taxon>
        <taxon>Mus</taxon>
        <taxon>Mus</taxon>
    </lineage>
</organism>
<feature type="chain" id="PRO_0000054134" description="Calcium-activated potassium channel subunit alpha-1">
    <location>
        <begin position="1"/>
        <end position="1209"/>
    </location>
</feature>
<feature type="topological domain" description="Extracellular" evidence="4">
    <location>
        <begin position="1"/>
        <end position="86"/>
    </location>
</feature>
<feature type="transmembrane region" description="Helical; Name=Segment S0" evidence="4">
    <location>
        <begin position="87"/>
        <end position="107"/>
    </location>
</feature>
<feature type="topological domain" description="Cytoplasmic" evidence="4">
    <location>
        <begin position="108"/>
        <end position="178"/>
    </location>
</feature>
<feature type="transmembrane region" description="Helical; Name=Segment S1" evidence="4">
    <location>
        <begin position="179"/>
        <end position="199"/>
    </location>
</feature>
<feature type="topological domain" description="Extracellular" evidence="4">
    <location>
        <begin position="200"/>
        <end position="214"/>
    </location>
</feature>
<feature type="transmembrane region" description="Helical; Name=Segment S2" evidence="4">
    <location>
        <begin position="215"/>
        <end position="235"/>
    </location>
</feature>
<feature type="topological domain" description="Cytoplasmic" evidence="4">
    <location>
        <begin position="236"/>
        <end position="239"/>
    </location>
</feature>
<feature type="transmembrane region" description="Helical; Name=Segment S3" evidence="4">
    <location>
        <begin position="240"/>
        <end position="260"/>
    </location>
</feature>
<feature type="topological domain" description="Extracellular" evidence="4">
    <location>
        <begin position="261"/>
        <end position="264"/>
    </location>
</feature>
<feature type="transmembrane region" description="Helical; Voltage-sensor; Name=Segment S4" evidence="4">
    <location>
        <begin position="265"/>
        <end position="285"/>
    </location>
</feature>
<feature type="topological domain" description="Cytoplasmic" evidence="4">
    <location>
        <begin position="286"/>
        <end position="300"/>
    </location>
</feature>
<feature type="transmembrane region" description="Helical; Name=Segment S5" evidence="4">
    <location>
        <begin position="301"/>
        <end position="321"/>
    </location>
</feature>
<feature type="topological domain" description="Extracellular" evidence="4">
    <location>
        <begin position="322"/>
        <end position="335"/>
    </location>
</feature>
<feature type="intramembrane region" description="Pore-forming; Name=P region" evidence="4">
    <location>
        <begin position="336"/>
        <end position="358"/>
    </location>
</feature>
<feature type="topological domain" description="Extracellular" evidence="4">
    <location>
        <begin position="359"/>
        <end position="367"/>
    </location>
</feature>
<feature type="transmembrane region" description="Helical; Name=Segment S6" evidence="4">
    <location>
        <begin position="368"/>
        <end position="388"/>
    </location>
</feature>
<feature type="topological domain" description="Cytoplasmic" evidence="4">
    <location>
        <begin position="389"/>
        <end position="1209"/>
    </location>
</feature>
<feature type="domain" description="RCK N-terminal 1" evidence="5">
    <location>
        <begin position="407"/>
        <end position="549"/>
    </location>
</feature>
<feature type="domain" description="RCK N-terminal 2" evidence="5">
    <location>
        <begin position="785"/>
        <end position="929"/>
    </location>
</feature>
<feature type="region of interest" description="Disordered" evidence="6">
    <location>
        <begin position="1"/>
        <end position="61"/>
    </location>
</feature>
<feature type="region of interest" description="Segment S7">
    <location>
        <begin position="556"/>
        <end position="576"/>
    </location>
</feature>
<feature type="region of interest" description="Segment S8">
    <location>
        <begin position="613"/>
        <end position="633"/>
    </location>
</feature>
<feature type="region of interest" description="Heme-binding motif" evidence="2">
    <location>
        <begin position="681"/>
        <end position="685"/>
    </location>
</feature>
<feature type="region of interest" description="Disordered" evidence="6">
    <location>
        <begin position="703"/>
        <end position="733"/>
    </location>
</feature>
<feature type="region of interest" description="Segment S9">
    <location>
        <begin position="783"/>
        <end position="803"/>
    </location>
</feature>
<feature type="region of interest" description="Segment S10">
    <location>
        <begin position="1005"/>
        <end position="1025"/>
    </location>
</feature>
<feature type="region of interest" description="Disordered" evidence="6">
    <location>
        <begin position="1159"/>
        <end position="1209"/>
    </location>
</feature>
<feature type="short sequence motif" description="Selectivity for potassium">
    <location>
        <begin position="352"/>
        <end position="355"/>
    </location>
</feature>
<feature type="short sequence motif" description="Calcium bowl" evidence="1">
    <location>
        <begin position="976"/>
        <end position="998"/>
    </location>
</feature>
<feature type="compositionally biased region" description="Gly residues" evidence="6">
    <location>
        <begin position="1"/>
        <end position="23"/>
    </location>
</feature>
<feature type="compositionally biased region" description="Polar residues" evidence="6">
    <location>
        <begin position="25"/>
        <end position="39"/>
    </location>
</feature>
<feature type="compositionally biased region" description="Low complexity" evidence="6">
    <location>
        <begin position="40"/>
        <end position="60"/>
    </location>
</feature>
<feature type="compositionally biased region" description="Low complexity" evidence="6">
    <location>
        <begin position="1159"/>
        <end position="1184"/>
    </location>
</feature>
<feature type="compositionally biased region" description="Basic and acidic residues" evidence="6">
    <location>
        <begin position="1193"/>
        <end position="1209"/>
    </location>
</feature>
<feature type="binding site" evidence="21">
    <location>
        <position position="439"/>
    </location>
    <ligand>
        <name>Mg(2+)</name>
        <dbReference type="ChEBI" id="CHEBI:18420"/>
    </ligand>
</feature>
<feature type="binding site" evidence="21">
    <location>
        <position position="462"/>
    </location>
    <ligand>
        <name>Mg(2+)</name>
        <dbReference type="ChEBI" id="CHEBI:18420"/>
    </ligand>
</feature>
<feature type="binding site" evidence="21">
    <location>
        <position position="464"/>
    </location>
    <ligand>
        <name>Mg(2+)</name>
        <dbReference type="ChEBI" id="CHEBI:18420"/>
    </ligand>
</feature>
<feature type="binding site" evidence="1">
    <location>
        <position position="985"/>
    </location>
    <ligand>
        <name>Ca(2+)</name>
        <dbReference type="ChEBI" id="CHEBI:29108"/>
    </ligand>
</feature>
<feature type="binding site" evidence="1">
    <location>
        <position position="988"/>
    </location>
    <ligand>
        <name>Ca(2+)</name>
        <dbReference type="ChEBI" id="CHEBI:29108"/>
    </ligand>
</feature>
<feature type="binding site" evidence="1">
    <location>
        <position position="991"/>
    </location>
    <ligand>
        <name>Ca(2+)</name>
        <dbReference type="ChEBI" id="CHEBI:29108"/>
    </ligand>
</feature>
<feature type="binding site" evidence="1">
    <location>
        <position position="993"/>
    </location>
    <ligand>
        <name>Ca(2+)</name>
        <dbReference type="ChEBI" id="CHEBI:29108"/>
    </ligand>
</feature>
<feature type="modified residue" description="Phosphothreonine" evidence="22">
    <location>
        <position position="709"/>
    </location>
</feature>
<feature type="modified residue" description="Phosphoserine" evidence="22">
    <location>
        <position position="711"/>
    </location>
</feature>
<feature type="modified residue" description="Phosphoserine" evidence="22">
    <location>
        <position position="724"/>
    </location>
</feature>
<feature type="modified residue" description="Phosphoserine" evidence="22">
    <location>
        <position position="728"/>
    </location>
</feature>
<feature type="modified residue" description="Phosphothreonine" evidence="22">
    <location>
        <position position="916"/>
    </location>
</feature>
<feature type="modified residue" description="Phosphoserine" evidence="22">
    <location>
        <position position="924"/>
    </location>
</feature>
<feature type="modified residue" description="Phosphoserine" evidence="22">
    <location>
        <position position="928"/>
    </location>
</feature>
<feature type="modified residue" description="Phosphoserine" evidence="3">
    <location>
        <position position="1194"/>
    </location>
</feature>
<feature type="modified residue" description="Phosphoserine" evidence="3">
    <location>
        <position position="1197"/>
    </location>
</feature>
<feature type="lipid moiety-binding region" description="S-palmitoyl cysteine" evidence="2">
    <location>
        <position position="118"/>
    </location>
</feature>
<feature type="lipid moiety-binding region" description="S-palmitoyl cysteine" evidence="2">
    <location>
        <position position="119"/>
    </location>
</feature>
<feature type="lipid moiety-binding region" description="S-palmitoyl cysteine" evidence="2">
    <location>
        <position position="121"/>
    </location>
</feature>
<feature type="splice variant" id="VSP_009959" description="In isoform 5." evidence="19">
    <location>
        <begin position="1"/>
        <end position="65"/>
    </location>
</feature>
<feature type="splice variant" id="VSP_009960" description="In isoform 2." evidence="19">
    <original>MANGGGGGGGSSGGGGGGGGGSGLRMSSNIHANNLSLDASSSSSSSSSSS</original>
    <variation>MELEHPKSPPYP</variation>
    <location>
        <begin position="1"/>
        <end position="50"/>
    </location>
</feature>
<feature type="splice variant" id="VSP_009961" description="In isoform 2, isoform 3 and isoform 4." evidence="17 18 19">
    <location>
        <begin position="643"/>
        <end position="646"/>
    </location>
</feature>
<feature type="splice variant" id="VSP_009962" description="In isoform 2." evidence="19">
    <original>L</original>
    <variation>LIYF</variation>
    <location>
        <position position="702"/>
    </location>
</feature>
<feature type="splice variant" id="VSP_009963" description="In isoform 4." evidence="17">
    <original>L</original>
    <variation>PKMSIYKRMRRACCFDCGRSERDCSCMSGRVRGNVDTLERTFPLSSVSVNDCSTSFRAF</variation>
    <location>
        <position position="702"/>
    </location>
</feature>
<feature type="splice variant" id="VSP_009964" description="In isoform 2, isoform 3 and isoform 4." evidence="17 18 19">
    <location>
        <begin position="948"/>
        <end position="974"/>
    </location>
</feature>
<feature type="splice variant" id="VSP_009965" description="In isoform 2." evidence="19">
    <original>RKEMVYR</original>
    <variation>ATRMTRMGQAEKKWFTDEPDNAYPRNIQIKPMSTHMANQINQYKSTSSLIPPIREVEDEC</variation>
    <location>
        <begin position="1203"/>
        <end position="1209"/>
    </location>
</feature>
<feature type="mutagenesis site" description="Loss of phosphorylation-independent activation of channel activity by ethanol. CaMK2-dependent phosphorylation leads to populations of partially phosphorylated tetramers with a range of responses to ethanol from activation to inhibition." evidence="14">
    <original>V</original>
    <variation>T</variation>
    <location>
        <position position="151"/>
    </location>
</feature>
<feature type="mutagenesis site" description="Alters the voltage-dependent gating." evidence="9">
    <original>R</original>
    <variation>Q</variation>
    <location>
        <position position="272"/>
    </location>
</feature>
<feature type="mutagenesis site" description="Alters the voltage-dependent gating." evidence="9">
    <original>R</original>
    <variation>Q</variation>
    <location>
        <position position="278"/>
    </location>
</feature>
<feature type="mutagenesis site" description="Alters the voltage-dependent gating; when associated with R-287." evidence="9">
    <original>E</original>
    <variation>R</variation>
    <location>
        <position position="284"/>
    </location>
</feature>
<feature type="mutagenesis site" description="Alters the voltage-dependent gating; when associated with K-284." evidence="9">
    <original>Q</original>
    <variation>R</variation>
    <location>
        <position position="287"/>
    </location>
</feature>
<feature type="mutagenesis site" description="Does not affect sensitivity to Ca(2+)." evidence="12">
    <original>D</original>
    <variation>A</variation>
    <location>
        <position position="427"/>
    </location>
</feature>
<feature type="mutagenesis site" description="Reduced sensitivity to Ca(2+)." evidence="12">
    <original>D</original>
    <variation>A</variation>
    <location>
        <position position="432"/>
    </location>
</feature>
<feature type="mutagenesis site" description="Does not affect sensitivity to Ca(2+)." evidence="12">
    <original>D</original>
    <variation>A</variation>
    <location>
        <position position="434"/>
    </location>
</feature>
<feature type="mutagenesis site" description="Abolishes sensitivity to Mg(2+), but not sensitivity to Ca(2+)." evidence="11">
    <original>E</original>
    <variation>A</variation>
    <location>
        <position position="439"/>
    </location>
</feature>
<feature type="mutagenesis site" description="Reduces sensitivity to Mg(2+), but not sensitivity to Ca(2+)." evidence="11">
    <original>H</original>
    <variation>G</variation>
    <location>
        <position position="444"/>
    </location>
</feature>
<feature type="mutagenesis site" description="Reduces sensitivity to Mg(2+), but not sensitivity to Ca(2+)." evidence="11">
    <original>T</original>
    <variation>A</variation>
    <location>
        <position position="461"/>
    </location>
</feature>
<feature type="mutagenesis site" description="Reduces sensitivity to Mg(2+), but not sensitivity to Ca(2+)." evidence="11">
    <original>Q</original>
    <variation>C</variation>
    <location>
        <position position="462"/>
    </location>
</feature>
<feature type="mutagenesis site" description="Remains sensitive to Mg(2+)." evidence="11 12">
    <original>E</original>
    <variation>D</variation>
    <variation>A</variation>
    <location>
        <position position="464"/>
    </location>
</feature>
<feature type="mutagenesis site" description="Abolishes sensitivity to Mg(2+), but not sensitivity to Ca(2+)." evidence="11 12">
    <original>E</original>
    <variation>N</variation>
    <location>
        <position position="464"/>
    </location>
</feature>
<feature type="mutagenesis site" description="Alters calcium binding." evidence="10">
    <original>DDDPD</original>
    <variation>AAAAA</variation>
    <location>
        <begin position="992"/>
        <end position="996"/>
    </location>
</feature>
<feature type="modified residue" description="Phosphothreonine" evidence="22">
    <location sequence="Q08460-2">
        <position position="670"/>
    </location>
</feature>
<feature type="modified residue" description="Phosphoserine" evidence="22">
    <location sequence="Q08460-2">
        <position position="672"/>
    </location>
</feature>
<keyword id="KW-0025">Alternative splicing</keyword>
<keyword id="KW-0106">Calcium</keyword>
<keyword id="KW-1003">Cell membrane</keyword>
<keyword id="KW-0407">Ion channel</keyword>
<keyword id="KW-0406">Ion transport</keyword>
<keyword id="KW-0449">Lipoprotein</keyword>
<keyword id="KW-0460">Magnesium</keyword>
<keyword id="KW-0472">Membrane</keyword>
<keyword id="KW-0479">Metal-binding</keyword>
<keyword id="KW-0564">Palmitate</keyword>
<keyword id="KW-0597">Phosphoprotein</keyword>
<keyword id="KW-0630">Potassium</keyword>
<keyword id="KW-0631">Potassium channel</keyword>
<keyword id="KW-0633">Potassium transport</keyword>
<keyword id="KW-1185">Reference proteome</keyword>
<keyword id="KW-0812">Transmembrane</keyword>
<keyword id="KW-1133">Transmembrane helix</keyword>
<keyword id="KW-0813">Transport</keyword>
<keyword id="KW-0851">Voltage-gated channel</keyword>
<gene>
    <name type="primary">Kcnma1</name>
    <name type="synonym">Kcnma</name>
</gene>
<evidence type="ECO:0000250" key="1">
    <source>
        <dbReference type="UniProtKB" id="B7ZC96"/>
    </source>
</evidence>
<evidence type="ECO:0000250" key="2">
    <source>
        <dbReference type="UniProtKB" id="Q12791"/>
    </source>
</evidence>
<evidence type="ECO:0000250" key="3">
    <source>
        <dbReference type="UniProtKB" id="Q28204"/>
    </source>
</evidence>
<evidence type="ECO:0000255" key="4"/>
<evidence type="ECO:0000255" key="5">
    <source>
        <dbReference type="PROSITE-ProRule" id="PRU00543"/>
    </source>
</evidence>
<evidence type="ECO:0000256" key="6">
    <source>
        <dbReference type="SAM" id="MobiDB-lite"/>
    </source>
</evidence>
<evidence type="ECO:0000269" key="7">
    <source>
    </source>
</evidence>
<evidence type="ECO:0000269" key="8">
    <source>
    </source>
</evidence>
<evidence type="ECO:0000269" key="9">
    <source>
    </source>
</evidence>
<evidence type="ECO:0000269" key="10">
    <source>
    </source>
</evidence>
<evidence type="ECO:0000269" key="11">
    <source>
    </source>
</evidence>
<evidence type="ECO:0000269" key="12">
    <source>
    </source>
</evidence>
<evidence type="ECO:0000269" key="13">
    <source>
    </source>
</evidence>
<evidence type="ECO:0000269" key="14">
    <source>
    </source>
</evidence>
<evidence type="ECO:0000269" key="15">
    <source>
    </source>
</evidence>
<evidence type="ECO:0000269" key="16">
    <source>
    </source>
</evidence>
<evidence type="ECO:0000303" key="17">
    <source>
    </source>
</evidence>
<evidence type="ECO:0000303" key="18">
    <source>
    </source>
</evidence>
<evidence type="ECO:0000303" key="19">
    <source>
    </source>
</evidence>
<evidence type="ECO:0000305" key="20"/>
<evidence type="ECO:0000305" key="21">
    <source>
    </source>
</evidence>
<evidence type="ECO:0007744" key="22">
    <source>
    </source>
</evidence>
<protein>
    <recommendedName>
        <fullName>Calcium-activated potassium channel subunit alpha-1</fullName>
    </recommendedName>
    <alternativeName>
        <fullName>BK channel</fullName>
    </alternativeName>
    <alternativeName>
        <fullName>BKCA alpha</fullName>
    </alternativeName>
    <alternativeName>
        <fullName>Calcium-activated potassium channel, subfamily M subunit alpha-1</fullName>
    </alternativeName>
    <alternativeName>
        <fullName>K(VCA)alpha</fullName>
    </alternativeName>
    <alternativeName>
        <fullName>KCa1.1</fullName>
    </alternativeName>
    <alternativeName>
        <fullName>Maxi K channel</fullName>
        <shortName>MaxiK</shortName>
    </alternativeName>
    <alternativeName>
        <fullName>Slo-alpha</fullName>
    </alternativeName>
    <alternativeName>
        <fullName>Slo1</fullName>
        <shortName>mSlo1</shortName>
    </alternativeName>
    <alternativeName>
        <fullName>Slowpoke homolog</fullName>
        <shortName>Slo homolog</shortName>
        <shortName>mSlo</shortName>
    </alternativeName>
</protein>
<name>KCMA1_MOUSE</name>